<sequence length="328" mass="37563">MEIVWEVLFLLQANFIVCISAQQNSPKIHEGWWAYKEVVQGSFVPVPSFWGLVNSAWNLCSVGKRQSPVNIETSHMIFDPFLTPLRINTGGRKVSGTMYNTGRHVSLRLDKEHLVNISGGPMTYSHRLEEIRLHFGSEDSQGSEHLLNGQAFSGEVQLIHYNHELYTNVTEAAKSPNGLVVVSIFIKVSDSSNPFLNRMLNRDTITRITYKNDAYLLQGLNIEELYPETSSFITYDGSMTIPPCYETASWIIMNKPVYITRMQMHSLRLLSQNQPSQIFLSMSDNFRPVQPLNNRCIRTNINFSLQGKDCPNNRAQKLQYRVNEWLLK</sequence>
<comment type="function">
    <text evidence="1">Does not have a catalytic activity.</text>
</comment>
<comment type="similarity">
    <text evidence="3">Belongs to the alpha-carbonic anhydrase family.</text>
</comment>
<keyword id="KW-1185">Reference proteome</keyword>
<protein>
    <recommendedName>
        <fullName>Carbonic anhydrase-related protein 10</fullName>
    </recommendedName>
</protein>
<organism>
    <name type="scientific">Macaca fascicularis</name>
    <name type="common">Crab-eating macaque</name>
    <name type="synonym">Cynomolgus monkey</name>
    <dbReference type="NCBI Taxonomy" id="9541"/>
    <lineage>
        <taxon>Eukaryota</taxon>
        <taxon>Metazoa</taxon>
        <taxon>Chordata</taxon>
        <taxon>Craniata</taxon>
        <taxon>Vertebrata</taxon>
        <taxon>Euteleostomi</taxon>
        <taxon>Mammalia</taxon>
        <taxon>Eutheria</taxon>
        <taxon>Euarchontoglires</taxon>
        <taxon>Primates</taxon>
        <taxon>Haplorrhini</taxon>
        <taxon>Catarrhini</taxon>
        <taxon>Cercopithecidae</taxon>
        <taxon>Cercopithecinae</taxon>
        <taxon>Macaca</taxon>
    </lineage>
</organism>
<proteinExistence type="evidence at transcript level"/>
<evidence type="ECO:0000250" key="1"/>
<evidence type="ECO:0000255" key="2">
    <source>
        <dbReference type="PROSITE-ProRule" id="PRU01134"/>
    </source>
</evidence>
<evidence type="ECO:0000305" key="3"/>
<feature type="chain" id="PRO_0000077437" description="Carbonic anhydrase-related protein 10">
    <location>
        <begin position="1"/>
        <end position="328"/>
    </location>
</feature>
<feature type="domain" description="Alpha-carbonic anhydrase" evidence="2">
    <location>
        <begin position="31"/>
        <end position="301"/>
    </location>
</feature>
<reference key="1">
    <citation type="submission" date="2000-07" db="EMBL/GenBank/DDBJ databases">
        <title>Isolation of full-length cDNA clones from macaque brain cDNA libraries.</title>
        <authorList>
            <person name="Osada N."/>
            <person name="Hida M."/>
            <person name="Kusuda J."/>
            <person name="Tanuma R."/>
            <person name="Iseki K."/>
            <person name="Hirai M."/>
            <person name="Terao K."/>
            <person name="Suzuki Y."/>
            <person name="Sugano S."/>
            <person name="Hashimoto K."/>
        </authorList>
    </citation>
    <scope>NUCLEOTIDE SEQUENCE [LARGE SCALE MRNA]</scope>
    <source>
        <tissue>Brain cortex</tissue>
    </source>
</reference>
<dbReference type="EMBL" id="AB046046">
    <property type="protein sequence ID" value="BAB01628.1"/>
    <property type="molecule type" value="mRNA"/>
</dbReference>
<dbReference type="RefSeq" id="NP_001270201.1">
    <property type="nucleotide sequence ID" value="NM_001283272.1"/>
</dbReference>
<dbReference type="RefSeq" id="XP_045230964.1">
    <property type="nucleotide sequence ID" value="XM_045375029.2"/>
</dbReference>
<dbReference type="SMR" id="Q9N085"/>
<dbReference type="STRING" id="9541.ENSMFAP00000012169"/>
<dbReference type="Ensembl" id="ENSMFAT00000056107.2">
    <property type="protein sequence ID" value="ENSMFAP00000012184.2"/>
    <property type="gene ID" value="ENSMFAG00000021148.2"/>
</dbReference>
<dbReference type="GeneID" id="101925405"/>
<dbReference type="VEuPathDB" id="HostDB:ENSMFAG00000021148"/>
<dbReference type="eggNOG" id="KOG0382">
    <property type="taxonomic scope" value="Eukaryota"/>
</dbReference>
<dbReference type="GeneTree" id="ENSGT00940000155223"/>
<dbReference type="OMA" id="MYYQANT"/>
<dbReference type="Proteomes" id="UP000233100">
    <property type="component" value="Chromosome 16"/>
</dbReference>
<dbReference type="Bgee" id="ENSMFAG00000021148">
    <property type="expression patterns" value="Expressed in cerebellum and 3 other cell types or tissues"/>
</dbReference>
<dbReference type="GO" id="GO:0004089">
    <property type="term" value="F:carbonate dehydratase activity"/>
    <property type="evidence" value="ECO:0007669"/>
    <property type="project" value="InterPro"/>
</dbReference>
<dbReference type="GO" id="GO:0008270">
    <property type="term" value="F:zinc ion binding"/>
    <property type="evidence" value="ECO:0007669"/>
    <property type="project" value="InterPro"/>
</dbReference>
<dbReference type="GO" id="GO:0006730">
    <property type="term" value="P:one-carbon metabolic process"/>
    <property type="evidence" value="ECO:0007669"/>
    <property type="project" value="TreeGrafter"/>
</dbReference>
<dbReference type="CDD" id="cd03121">
    <property type="entry name" value="alpha_CARP_X_XI_like"/>
    <property type="match status" value="1"/>
</dbReference>
<dbReference type="FunFam" id="3.10.200.10:FF:000002">
    <property type="entry name" value="Carbonic anhydrase-related protein 10"/>
    <property type="match status" value="1"/>
</dbReference>
<dbReference type="Gene3D" id="3.10.200.10">
    <property type="entry name" value="Alpha carbonic anhydrase"/>
    <property type="match status" value="1"/>
</dbReference>
<dbReference type="InterPro" id="IPR041878">
    <property type="entry name" value="Alpha_CARP_X/XI"/>
</dbReference>
<dbReference type="InterPro" id="IPR001148">
    <property type="entry name" value="CA_dom"/>
</dbReference>
<dbReference type="InterPro" id="IPR036398">
    <property type="entry name" value="CA_dom_sf"/>
</dbReference>
<dbReference type="InterPro" id="IPR023561">
    <property type="entry name" value="Carbonic_anhydrase_a-class"/>
</dbReference>
<dbReference type="PANTHER" id="PTHR18952">
    <property type="entry name" value="CARBONIC ANHYDRASE"/>
    <property type="match status" value="1"/>
</dbReference>
<dbReference type="PANTHER" id="PTHR18952:SF91">
    <property type="entry name" value="CARBONIC ANHYDRASE-RELATED PROTEIN 10"/>
    <property type="match status" value="1"/>
</dbReference>
<dbReference type="Pfam" id="PF00194">
    <property type="entry name" value="Carb_anhydrase"/>
    <property type="match status" value="1"/>
</dbReference>
<dbReference type="SMART" id="SM01057">
    <property type="entry name" value="Carb_anhydrase"/>
    <property type="match status" value="1"/>
</dbReference>
<dbReference type="SUPFAM" id="SSF51069">
    <property type="entry name" value="Carbonic anhydrase"/>
    <property type="match status" value="1"/>
</dbReference>
<dbReference type="PROSITE" id="PS51144">
    <property type="entry name" value="ALPHA_CA_2"/>
    <property type="match status" value="1"/>
</dbReference>
<name>CAH10_MACFA</name>
<gene>
    <name type="primary">CA10</name>
    <name type="ORF">QccE-11301</name>
</gene>
<accession>Q9N085</accession>